<organism>
    <name type="scientific">Escherichia coli (strain K12)</name>
    <dbReference type="NCBI Taxonomy" id="83333"/>
    <lineage>
        <taxon>Bacteria</taxon>
        <taxon>Pseudomonadati</taxon>
        <taxon>Pseudomonadota</taxon>
        <taxon>Gammaproteobacteria</taxon>
        <taxon>Enterobacterales</taxon>
        <taxon>Enterobacteriaceae</taxon>
        <taxon>Escherichia</taxon>
    </lineage>
</organism>
<accession>P76117</accession>
<accession>Q2MBB0</accession>
<sequence length="205" mass="23321">MIKVYGVPGWGSTISELMLTLADIPYQFVDVSGFDHEGASRELLKTLNPLCQVPTLALENDEIMTETAAIALMVLDRRPDLAPPVGRAERQLFQRLLVWLVANVYPTFTFADYPERWAPDAPEQLKKNVIEYRKSLYIWLNSQLTAEPYAFGEQLTLVDCYLCTMRTWGPGHEWFQDNATNISAIADAVCQLPKLQEVLKRNEII</sequence>
<comment type="similarity">
    <text evidence="2">Belongs to the GST superfamily. Beta family.</text>
</comment>
<gene>
    <name type="primary">yncG</name>
    <name type="ordered locus">b1454</name>
    <name type="ordered locus">JW1449</name>
</gene>
<keyword id="KW-1185">Reference proteome</keyword>
<keyword id="KW-0808">Transferase</keyword>
<reference key="1">
    <citation type="journal article" date="1997" name="Science">
        <title>The complete genome sequence of Escherichia coli K-12.</title>
        <authorList>
            <person name="Blattner F.R."/>
            <person name="Plunkett G. III"/>
            <person name="Bloch C.A."/>
            <person name="Perna N.T."/>
            <person name="Burland V."/>
            <person name="Riley M."/>
            <person name="Collado-Vides J."/>
            <person name="Glasner J.D."/>
            <person name="Rode C.K."/>
            <person name="Mayhew G.F."/>
            <person name="Gregor J."/>
            <person name="Davis N.W."/>
            <person name="Kirkpatrick H.A."/>
            <person name="Goeden M.A."/>
            <person name="Rose D.J."/>
            <person name="Mau B."/>
            <person name="Shao Y."/>
        </authorList>
    </citation>
    <scope>NUCLEOTIDE SEQUENCE [LARGE SCALE GENOMIC DNA]</scope>
    <source>
        <strain>K12 / MG1655 / ATCC 47076</strain>
    </source>
</reference>
<reference key="2">
    <citation type="journal article" date="2006" name="Mol. Syst. Biol.">
        <title>Highly accurate genome sequences of Escherichia coli K-12 strains MG1655 and W3110.</title>
        <authorList>
            <person name="Hayashi K."/>
            <person name="Morooka N."/>
            <person name="Yamamoto Y."/>
            <person name="Fujita K."/>
            <person name="Isono K."/>
            <person name="Choi S."/>
            <person name="Ohtsubo E."/>
            <person name="Baba T."/>
            <person name="Wanner B.L."/>
            <person name="Mori H."/>
            <person name="Horiuchi T."/>
        </authorList>
    </citation>
    <scope>NUCLEOTIDE SEQUENCE [LARGE SCALE GENOMIC DNA]</scope>
    <source>
        <strain>K12 / W3110 / ATCC 27325 / DSM 5911</strain>
    </source>
</reference>
<protein>
    <recommendedName>
        <fullName>Uncharacterized GST-like protein YncG</fullName>
    </recommendedName>
</protein>
<dbReference type="EMBL" id="U00096">
    <property type="protein sequence ID" value="AAC74536.1"/>
    <property type="molecule type" value="Genomic_DNA"/>
</dbReference>
<dbReference type="EMBL" id="AP009048">
    <property type="protein sequence ID" value="BAE76446.1"/>
    <property type="molecule type" value="Genomic_DNA"/>
</dbReference>
<dbReference type="PIR" id="A64898">
    <property type="entry name" value="A64898"/>
</dbReference>
<dbReference type="RefSeq" id="NP_415971.1">
    <property type="nucleotide sequence ID" value="NC_000913.3"/>
</dbReference>
<dbReference type="RefSeq" id="WP_000598857.1">
    <property type="nucleotide sequence ID" value="NZ_SSZK01000021.1"/>
</dbReference>
<dbReference type="SMR" id="P76117"/>
<dbReference type="BioGRID" id="4260200">
    <property type="interactions" value="17"/>
</dbReference>
<dbReference type="FunCoup" id="P76117">
    <property type="interactions" value="12"/>
</dbReference>
<dbReference type="IntAct" id="P76117">
    <property type="interactions" value="3"/>
</dbReference>
<dbReference type="STRING" id="511145.b1454"/>
<dbReference type="jPOST" id="P76117"/>
<dbReference type="PaxDb" id="511145-b1454"/>
<dbReference type="EnsemblBacteria" id="AAC74536">
    <property type="protein sequence ID" value="AAC74536"/>
    <property type="gene ID" value="b1454"/>
</dbReference>
<dbReference type="GeneID" id="946023"/>
<dbReference type="KEGG" id="ecj:JW1449"/>
<dbReference type="KEGG" id="eco:b1454"/>
<dbReference type="KEGG" id="ecoc:C3026_08455"/>
<dbReference type="PATRIC" id="fig|1411691.4.peg.813"/>
<dbReference type="EchoBASE" id="EB3539"/>
<dbReference type="eggNOG" id="COG0625">
    <property type="taxonomic scope" value="Bacteria"/>
</dbReference>
<dbReference type="HOGENOM" id="CLU_011226_6_5_6"/>
<dbReference type="InParanoid" id="P76117"/>
<dbReference type="OMA" id="YIAANCY"/>
<dbReference type="OrthoDB" id="5508354at2"/>
<dbReference type="PhylomeDB" id="P76117"/>
<dbReference type="BioCyc" id="EcoCyc:G6765-MONOMER"/>
<dbReference type="PRO" id="PR:P76117"/>
<dbReference type="Proteomes" id="UP000000625">
    <property type="component" value="Chromosome"/>
</dbReference>
<dbReference type="GO" id="GO:0005737">
    <property type="term" value="C:cytoplasm"/>
    <property type="evidence" value="ECO:0000318"/>
    <property type="project" value="GO_Central"/>
</dbReference>
<dbReference type="GO" id="GO:0004364">
    <property type="term" value="F:glutathione transferase activity"/>
    <property type="evidence" value="ECO:0000318"/>
    <property type="project" value="GO_Central"/>
</dbReference>
<dbReference type="GO" id="GO:0042542">
    <property type="term" value="P:response to hydrogen peroxide"/>
    <property type="evidence" value="ECO:0000315"/>
    <property type="project" value="EcoCyc"/>
</dbReference>
<dbReference type="CDD" id="cd03057">
    <property type="entry name" value="GST_N_Beta"/>
    <property type="match status" value="1"/>
</dbReference>
<dbReference type="Gene3D" id="1.20.1050.10">
    <property type="match status" value="1"/>
</dbReference>
<dbReference type="Gene3D" id="3.40.30.10">
    <property type="entry name" value="Glutaredoxin"/>
    <property type="match status" value="1"/>
</dbReference>
<dbReference type="InterPro" id="IPR010987">
    <property type="entry name" value="Glutathione-S-Trfase_C-like"/>
</dbReference>
<dbReference type="InterPro" id="IPR036282">
    <property type="entry name" value="Glutathione-S-Trfase_C_sf"/>
</dbReference>
<dbReference type="InterPro" id="IPR004045">
    <property type="entry name" value="Glutathione_S-Trfase_N"/>
</dbReference>
<dbReference type="InterPro" id="IPR036249">
    <property type="entry name" value="Thioredoxin-like_sf"/>
</dbReference>
<dbReference type="PANTHER" id="PTHR44051:SF8">
    <property type="entry name" value="GLUTATHIONE S-TRANSFERASE GSTA"/>
    <property type="match status" value="1"/>
</dbReference>
<dbReference type="PANTHER" id="PTHR44051">
    <property type="entry name" value="GLUTATHIONE S-TRANSFERASE-RELATED"/>
    <property type="match status" value="1"/>
</dbReference>
<dbReference type="Pfam" id="PF13409">
    <property type="entry name" value="GST_N_2"/>
    <property type="match status" value="1"/>
</dbReference>
<dbReference type="SUPFAM" id="SSF47616">
    <property type="entry name" value="GST C-terminal domain-like"/>
    <property type="match status" value="1"/>
</dbReference>
<dbReference type="SUPFAM" id="SSF52833">
    <property type="entry name" value="Thioredoxin-like"/>
    <property type="match status" value="1"/>
</dbReference>
<dbReference type="PROSITE" id="PS50405">
    <property type="entry name" value="GST_CTER"/>
    <property type="match status" value="1"/>
</dbReference>
<dbReference type="PROSITE" id="PS50404">
    <property type="entry name" value="GST_NTER"/>
    <property type="match status" value="1"/>
</dbReference>
<evidence type="ECO:0000250" key="1">
    <source>
        <dbReference type="UniProtKB" id="P0A9D2"/>
    </source>
</evidence>
<evidence type="ECO:0000305" key="2"/>
<feature type="chain" id="PRO_0000186021" description="Uncharacterized GST-like protein YncG">
    <location>
        <begin position="1"/>
        <end position="205"/>
    </location>
</feature>
<feature type="domain" description="GST N-terminal">
    <location>
        <begin position="1"/>
        <end position="82"/>
    </location>
</feature>
<feature type="domain" description="GST C-terminal">
    <location>
        <begin position="86"/>
        <end position="205"/>
    </location>
</feature>
<feature type="binding site" evidence="1">
    <location>
        <position position="53"/>
    </location>
    <ligand>
        <name>glutathione</name>
        <dbReference type="ChEBI" id="CHEBI:57925"/>
    </ligand>
</feature>
<feature type="binding site" evidence="1">
    <location>
        <begin position="66"/>
        <end position="67"/>
    </location>
    <ligand>
        <name>glutathione</name>
        <dbReference type="ChEBI" id="CHEBI:57925"/>
    </ligand>
</feature>
<proteinExistence type="inferred from homology"/>
<name>YNCG_ECOLI</name>